<comment type="function">
    <text evidence="4 5 6 7">Regulates the formation or stabilization of cell-cell contacts at several stages of epithelial morphogenesis (PubMed:12679110). In early embryonic development, involved in ventral closure of the epidermis (PubMed:12403719). During male tail morphogenesis, regulates precursor cell sorting together with mab-20 and allows the formation of distinct sensory rays (PubMed:15030761). Probably acts as a ligand for lad-2 to regulate axon guidance of several neurons including SDQL, SDQR, SMD and PLN neurons during neurogenesis (PubMed:26903502).</text>
</comment>
<comment type="subunit">
    <text evidence="7">Interacts with lat-2.</text>
</comment>
<comment type="subcellular location">
    <subcellularLocation>
        <location evidence="8">Cell membrane</location>
        <topology evidence="8">Lipid-anchor</topology>
        <topology evidence="8">GPI-anchor</topology>
    </subcellularLocation>
</comment>
<comment type="developmental stage">
    <text evidence="4 7">Expressed in the developing nervous system (PubMed:12403719). Expressed in head and tail neurons, nerve ring, ventral nerve cord, lateral neurons, CAN neuron, seam cells and vulva cells (PubMed:26903502).</text>
</comment>
<comment type="PTM">
    <text evidence="9">May undergo proteolysis by metalloprotease sup-17 to give rise to a soluble form.</text>
</comment>
<comment type="disruption phenotype">
    <text evidence="4">Worms have widespread defects in embryonic morphogenesis of the posterior body and defects in postembryonic male tail morphogenesis.</text>
</comment>
<comment type="miscellaneous">
    <text evidence="4">In contrast to other ephrins, does not seem to signal through the vab-1 receptor.</text>
</comment>
<comment type="similarity">
    <text evidence="2">Belongs to the ephrin family.</text>
</comment>
<evidence type="ECO:0000255" key="1"/>
<evidence type="ECO:0000255" key="2">
    <source>
        <dbReference type="PROSITE-ProRule" id="PRU00884"/>
    </source>
</evidence>
<evidence type="ECO:0000256" key="3">
    <source>
        <dbReference type="SAM" id="MobiDB-lite"/>
    </source>
</evidence>
<evidence type="ECO:0000269" key="4">
    <source>
    </source>
</evidence>
<evidence type="ECO:0000269" key="5">
    <source>
    </source>
</evidence>
<evidence type="ECO:0000269" key="6">
    <source>
    </source>
</evidence>
<evidence type="ECO:0000269" key="7">
    <source>
    </source>
</evidence>
<evidence type="ECO:0000305" key="8"/>
<evidence type="ECO:0000305" key="9">
    <source>
    </source>
</evidence>
<keyword id="KW-1003">Cell membrane</keyword>
<keyword id="KW-0217">Developmental protein</keyword>
<keyword id="KW-1015">Disulfide bond</keyword>
<keyword id="KW-0325">Glycoprotein</keyword>
<keyword id="KW-0336">GPI-anchor</keyword>
<keyword id="KW-0449">Lipoprotein</keyword>
<keyword id="KW-0472">Membrane</keyword>
<keyword id="KW-0524">Neurogenesis</keyword>
<keyword id="KW-1185">Reference proteome</keyword>
<keyword id="KW-0732">Signal</keyword>
<sequence>MKQFFEFLITTFLLLGLAAADEHIVYWNSTNSLFRNRQPTIEVRMGDVVRFVCPDNEEGRNDGEYLIVYEVTEFAMDDCALESHSREVIRCAPEGTAEKVLRTQQLSGGRREDWKKQKVPPKNVAQLIRQLNPIPNGKEYQPGQTYYYMTTSTGKANGTNHRMYGLCESQNMRLSMKVSASQPHPTRRAPTRRQEDFVTTASAELMGGQEDEDSDNDNAHLLPRDLEGSTNPKFRRPSQLETAGVENQQFMKVVQMAQAGKTGTFENEKEAIAQKSSEKDGWHPVNVQYVADLMNNAYQNADERISYQRDFEIHEENDLAVKSLEYSSSSTSLSTNFAILLAVIYVLY</sequence>
<organism>
    <name type="scientific">Caenorhabditis elegans</name>
    <dbReference type="NCBI Taxonomy" id="6239"/>
    <lineage>
        <taxon>Eukaryota</taxon>
        <taxon>Metazoa</taxon>
        <taxon>Ecdysozoa</taxon>
        <taxon>Nematoda</taxon>
        <taxon>Chromadorea</taxon>
        <taxon>Rhabditida</taxon>
        <taxon>Rhabditina</taxon>
        <taxon>Rhabditomorpha</taxon>
        <taxon>Rhabditoidea</taxon>
        <taxon>Rhabditidae</taxon>
        <taxon>Peloderinae</taxon>
        <taxon>Caenorhabditis</taxon>
    </lineage>
</organism>
<protein>
    <recommendedName>
        <fullName>Ephrin-4</fullName>
    </recommendedName>
    <alternativeName>
        <fullName>Protein male abnormal 26</fullName>
    </alternativeName>
</protein>
<feature type="signal peptide" evidence="1">
    <location>
        <begin position="1"/>
        <end position="20"/>
    </location>
</feature>
<feature type="chain" id="PRO_0000248550" description="Ephrin-4">
    <location>
        <begin position="21"/>
        <end position="329"/>
    </location>
</feature>
<feature type="propeptide" id="PRO_0000248551" description="Removed in mature form" evidence="1">
    <location>
        <begin position="330"/>
        <end position="348"/>
    </location>
</feature>
<feature type="domain" description="Ephrin RBD" evidence="2">
    <location>
        <begin position="21"/>
        <end position="178"/>
    </location>
</feature>
<feature type="region of interest" description="Disordered" evidence="3">
    <location>
        <begin position="207"/>
        <end position="237"/>
    </location>
</feature>
<feature type="lipid moiety-binding region" description="GPI-anchor amidated serine" evidence="1">
    <location>
        <position position="329"/>
    </location>
</feature>
<feature type="glycosylation site" description="N-linked (GlcNAc...) asparagine" evidence="1">
    <location>
        <position position="28"/>
    </location>
</feature>
<feature type="glycosylation site" description="N-linked (GlcNAc...) asparagine" evidence="1">
    <location>
        <position position="157"/>
    </location>
</feature>
<feature type="disulfide bond" evidence="2">
    <location>
        <begin position="53"/>
        <end position="91"/>
    </location>
</feature>
<feature type="disulfide bond" evidence="2">
    <location>
        <begin position="79"/>
        <end position="167"/>
    </location>
</feature>
<feature type="mutagenesis site" description="No defect in SDQL axon migration. Restores SDQL axon migration in a sup-17 (n316) mutant background." evidence="7">
    <location>
        <begin position="328"/>
        <end position="348"/>
    </location>
</feature>
<reference key="1">
    <citation type="journal article" date="2002" name="Development">
        <title>The divergent C. elegans ephrin EFN-4 functions in embryonic morphogenesis in a pathway independent of the VAB-1 Eph receptor.</title>
        <authorList>
            <person name="Chin-Sang I.D."/>
            <person name="Moseley S.L."/>
            <person name="Ding M."/>
            <person name="Harrington R.J."/>
            <person name="George S.E."/>
            <person name="Chisholm A.D."/>
        </authorList>
    </citation>
    <scope>NUCLEOTIDE SEQUENCE [MRNA]</scope>
    <scope>FUNCTION</scope>
    <scope>DEVELOPMENTAL STAGE</scope>
    <scope>DISRUPTION PHENOTYPE</scope>
    <source>
        <strain>Bristol N2</strain>
    </source>
</reference>
<reference key="2">
    <citation type="journal article" date="1998" name="Science">
        <title>Genome sequence of the nematode C. elegans: a platform for investigating biology.</title>
        <authorList>
            <consortium name="The C. elegans sequencing consortium"/>
        </authorList>
    </citation>
    <scope>NUCLEOTIDE SEQUENCE [LARGE SCALE GENOMIC DNA]</scope>
    <source>
        <strain>Bristol N2</strain>
    </source>
</reference>
<reference key="3">
    <citation type="journal article" date="1999" name="Mol. Cell">
        <title>Multiple ephrins control cell organization in C. elegans using kinase-dependent and -independent functions of the VAB-1 Eph receptor.</title>
        <authorList>
            <person name="Wang X."/>
            <person name="Roy P.J."/>
            <person name="Holland S.J."/>
            <person name="Zhang L.W."/>
            <person name="Culotti J.G."/>
            <person name="Pawson T."/>
        </authorList>
    </citation>
    <scope>IDENTIFICATION</scope>
    <scope>NOMENCLATURE</scope>
</reference>
<reference key="4">
    <citation type="journal article" date="2003" name="Dev. Biol.">
        <title>The roles of an ephrin and a semaphorin in patterning cell-cell contacts in C. elegans sensory organ development.</title>
        <authorList>
            <person name="Hahn A.C."/>
            <person name="Emmons S.W."/>
        </authorList>
    </citation>
    <scope>FUNCTION</scope>
</reference>
<reference key="5">
    <citation type="journal article" date="2004" name="Dev. Cell">
        <title>Integration of semaphorin-2A/MAB-20, ephrin-4, and UNC-129 TGF-beta signaling pathways regulates sorting of distinct sensory rays in C. elegans.</title>
        <authorList>
            <person name="Ikegami R."/>
            <person name="Zheng H."/>
            <person name="Ong S.-H."/>
            <person name="Culotti J.G."/>
        </authorList>
    </citation>
    <scope>FUNCTION</scope>
</reference>
<reference key="6">
    <citation type="journal article" date="2016" name="Development">
        <title>EFN-4 functions in LAD-2-mediated axon guidance in Caenorhabditis elegans.</title>
        <authorList>
            <person name="Dong B."/>
            <person name="Moseley-Alldredge M."/>
            <person name="Schwieterman A.A."/>
            <person name="Donelson C.J."/>
            <person name="McMurry J.L."/>
            <person name="Hudson M.L."/>
            <person name="Chen L."/>
        </authorList>
    </citation>
    <scope>FUNCTION</scope>
    <scope>INTERACTION WITH LAD-2</scope>
    <scope>DEVELOPMENTAL STAGE</scope>
    <scope>MUTAGENESIS OF 328-SER--TYR-348</scope>
</reference>
<accession>O44516</accession>
<dbReference type="EMBL" id="AF410936">
    <property type="protein sequence ID" value="AAL05561.1"/>
    <property type="molecule type" value="mRNA"/>
</dbReference>
<dbReference type="EMBL" id="FO080624">
    <property type="protein sequence ID" value="CCD65257.1"/>
    <property type="molecule type" value="Genomic_DNA"/>
</dbReference>
<dbReference type="PIR" id="T32645">
    <property type="entry name" value="T32645"/>
</dbReference>
<dbReference type="RefSeq" id="NP_499947.1">
    <property type="nucleotide sequence ID" value="NM_067546.6"/>
</dbReference>
<dbReference type="SMR" id="O44516"/>
<dbReference type="BioGRID" id="42043">
    <property type="interactions" value="6"/>
</dbReference>
<dbReference type="FunCoup" id="O44516">
    <property type="interactions" value="31"/>
</dbReference>
<dbReference type="STRING" id="6239.F56A11.3.1"/>
<dbReference type="GlyCosmos" id="O44516">
    <property type="glycosylation" value="2 sites, No reported glycans"/>
</dbReference>
<dbReference type="PaxDb" id="6239-F56A11.3"/>
<dbReference type="EnsemblMetazoa" id="F56A11.3.1">
    <property type="protein sequence ID" value="F56A11.3.1"/>
    <property type="gene ID" value="WBGene00001165"/>
</dbReference>
<dbReference type="GeneID" id="176882"/>
<dbReference type="KEGG" id="cel:CELE_F56A11.3"/>
<dbReference type="UCSC" id="F56A11.3">
    <property type="organism name" value="c. elegans"/>
</dbReference>
<dbReference type="AGR" id="WB:WBGene00001165"/>
<dbReference type="CTD" id="176882"/>
<dbReference type="WormBase" id="F56A11.3">
    <property type="protein sequence ID" value="CE29503"/>
    <property type="gene ID" value="WBGene00001165"/>
    <property type="gene designation" value="efn-4"/>
</dbReference>
<dbReference type="eggNOG" id="KOG3858">
    <property type="taxonomic scope" value="Eukaryota"/>
</dbReference>
<dbReference type="GeneTree" id="ENSGT00970000196527"/>
<dbReference type="HOGENOM" id="CLU_779010_0_0_1"/>
<dbReference type="InParanoid" id="O44516"/>
<dbReference type="OMA" id="FVCPDNE"/>
<dbReference type="OrthoDB" id="6250301at2759"/>
<dbReference type="PhylomeDB" id="O44516"/>
<dbReference type="Reactome" id="R-CEL-2682334">
    <property type="pathway name" value="EPH-Ephrin signaling"/>
</dbReference>
<dbReference type="Reactome" id="R-CEL-3928662">
    <property type="pathway name" value="EPHB-mediated forward signaling"/>
</dbReference>
<dbReference type="Reactome" id="R-CEL-3928663">
    <property type="pathway name" value="EPHA-mediated growth cone collapse"/>
</dbReference>
<dbReference type="Reactome" id="R-CEL-3928664">
    <property type="pathway name" value="Ephrin signaling"/>
</dbReference>
<dbReference type="Reactome" id="R-CEL-3928665">
    <property type="pathway name" value="EPH-ephrin mediated repulsion of cells"/>
</dbReference>
<dbReference type="SignaLink" id="O44516"/>
<dbReference type="PRO" id="PR:O44516"/>
<dbReference type="Proteomes" id="UP000001940">
    <property type="component" value="Chromosome IV"/>
</dbReference>
<dbReference type="Bgee" id="WBGene00001165">
    <property type="expression patterns" value="Expressed in pharyngeal muscle cell (C elegans) and 3 other cell types or tissues"/>
</dbReference>
<dbReference type="GO" id="GO:0030424">
    <property type="term" value="C:axon"/>
    <property type="evidence" value="ECO:0000314"/>
    <property type="project" value="WormBase"/>
</dbReference>
<dbReference type="GO" id="GO:0043025">
    <property type="term" value="C:neuronal cell body"/>
    <property type="evidence" value="ECO:0000314"/>
    <property type="project" value="WormBase"/>
</dbReference>
<dbReference type="GO" id="GO:0005886">
    <property type="term" value="C:plasma membrane"/>
    <property type="evidence" value="ECO:0000318"/>
    <property type="project" value="GO_Central"/>
</dbReference>
<dbReference type="GO" id="GO:0098552">
    <property type="term" value="C:side of membrane"/>
    <property type="evidence" value="ECO:0007669"/>
    <property type="project" value="UniProtKB-KW"/>
</dbReference>
<dbReference type="GO" id="GO:0046875">
    <property type="term" value="F:ephrin receptor binding"/>
    <property type="evidence" value="ECO:0000318"/>
    <property type="project" value="GO_Central"/>
</dbReference>
<dbReference type="GO" id="GO:0007411">
    <property type="term" value="P:axon guidance"/>
    <property type="evidence" value="ECO:0000318"/>
    <property type="project" value="GO_Central"/>
</dbReference>
<dbReference type="GO" id="GO:0042074">
    <property type="term" value="P:cell migration involved in gastrulation"/>
    <property type="evidence" value="ECO:0000315"/>
    <property type="project" value="WormBase"/>
</dbReference>
<dbReference type="GO" id="GO:0009792">
    <property type="term" value="P:embryo development ending in birth or egg hatching"/>
    <property type="evidence" value="ECO:0000315"/>
    <property type="project" value="WormBase"/>
</dbReference>
<dbReference type="GO" id="GO:0048013">
    <property type="term" value="P:ephrin receptor signaling pathway"/>
    <property type="evidence" value="ECO:0000318"/>
    <property type="project" value="GO_Central"/>
</dbReference>
<dbReference type="GO" id="GO:0016331">
    <property type="term" value="P:morphogenesis of embryonic epithelium"/>
    <property type="evidence" value="ECO:0000315"/>
    <property type="project" value="WormBase"/>
</dbReference>
<dbReference type="GO" id="GO:0045138">
    <property type="term" value="P:nematode male tail tip morphogenesis"/>
    <property type="evidence" value="ECO:0000315"/>
    <property type="project" value="WormBase"/>
</dbReference>
<dbReference type="GO" id="GO:1902667">
    <property type="term" value="P:regulation of axon guidance"/>
    <property type="evidence" value="ECO:0000315"/>
    <property type="project" value="UniProtKB"/>
</dbReference>
<dbReference type="GO" id="GO:0030155">
    <property type="term" value="P:regulation of cell adhesion"/>
    <property type="evidence" value="ECO:0000315"/>
    <property type="project" value="WormBase"/>
</dbReference>
<dbReference type="CDD" id="cd02675">
    <property type="entry name" value="Ephrin_ectodomain"/>
    <property type="match status" value="1"/>
</dbReference>
<dbReference type="FunFam" id="2.60.40.420:FF:000122">
    <property type="entry name" value="Ephrin-4"/>
    <property type="match status" value="1"/>
</dbReference>
<dbReference type="Gene3D" id="2.60.40.420">
    <property type="entry name" value="Cupredoxins - blue copper proteins"/>
    <property type="match status" value="1"/>
</dbReference>
<dbReference type="InterPro" id="IPR008972">
    <property type="entry name" value="Cupredoxin"/>
</dbReference>
<dbReference type="InterPro" id="IPR031328">
    <property type="entry name" value="Ephrin"/>
</dbReference>
<dbReference type="InterPro" id="IPR001799">
    <property type="entry name" value="Ephrin_RBD"/>
</dbReference>
<dbReference type="PANTHER" id="PTHR11304">
    <property type="entry name" value="EPHRIN"/>
    <property type="match status" value="1"/>
</dbReference>
<dbReference type="PANTHER" id="PTHR11304:SF44">
    <property type="entry name" value="EPHRIN-4"/>
    <property type="match status" value="1"/>
</dbReference>
<dbReference type="Pfam" id="PF00812">
    <property type="entry name" value="Ephrin"/>
    <property type="match status" value="1"/>
</dbReference>
<dbReference type="SUPFAM" id="SSF49503">
    <property type="entry name" value="Cupredoxins"/>
    <property type="match status" value="1"/>
</dbReference>
<dbReference type="PROSITE" id="PS51551">
    <property type="entry name" value="EPHRIN_RBD_2"/>
    <property type="match status" value="1"/>
</dbReference>
<gene>
    <name type="primary">efn-4</name>
    <name type="synonym">mab-26</name>
    <name type="ORF">F56A11.3</name>
</gene>
<name>EFN4_CAEEL</name>
<proteinExistence type="evidence at protein level"/>